<evidence type="ECO:0000255" key="1">
    <source>
        <dbReference type="HAMAP-Rule" id="MF_00082"/>
    </source>
</evidence>
<sequence length="257" mass="26890">MNPLIIKLGGVLLDSEEALERLFTALVNYRESHQRPLVIVHGGGCVVDELMKGLNLPVKKKDGLRVTPADQIGIITGALAGTANKTLLAWAKKHHIASVGLFLGDGDSVKVTQLDEALGHVGLAQPGSPKLINMLLENGFLPVVSSIGVTDDGQLMNVNADQAATALAATLGADLILLSDVSGILDGKGQRIAEMTASKAEQLIDQGIITDGMIVKVNAALDAARALGRPVDIASWRHAEQLPALFNGTPIGTRILA</sequence>
<organism>
    <name type="scientific">Salmonella schwarzengrund (strain CVM19633)</name>
    <dbReference type="NCBI Taxonomy" id="439843"/>
    <lineage>
        <taxon>Bacteria</taxon>
        <taxon>Pseudomonadati</taxon>
        <taxon>Pseudomonadota</taxon>
        <taxon>Gammaproteobacteria</taxon>
        <taxon>Enterobacterales</taxon>
        <taxon>Enterobacteriaceae</taxon>
        <taxon>Salmonella</taxon>
    </lineage>
</organism>
<protein>
    <recommendedName>
        <fullName evidence="1">Acetylglutamate kinase</fullName>
        <ecNumber evidence="1">2.7.2.8</ecNumber>
    </recommendedName>
    <alternativeName>
        <fullName evidence="1">N-acetyl-L-glutamate 5-phosphotransferase</fullName>
    </alternativeName>
    <alternativeName>
        <fullName evidence="1">NAG kinase</fullName>
        <shortName evidence="1">NAGK</shortName>
    </alternativeName>
</protein>
<accession>B4TQH5</accession>
<comment type="function">
    <text evidence="1">Catalyzes the ATP-dependent phosphorylation of N-acetyl-L-glutamate.</text>
</comment>
<comment type="catalytic activity">
    <reaction evidence="1">
        <text>N-acetyl-L-glutamate + ATP = N-acetyl-L-glutamyl 5-phosphate + ADP</text>
        <dbReference type="Rhea" id="RHEA:14629"/>
        <dbReference type="ChEBI" id="CHEBI:30616"/>
        <dbReference type="ChEBI" id="CHEBI:44337"/>
        <dbReference type="ChEBI" id="CHEBI:57936"/>
        <dbReference type="ChEBI" id="CHEBI:456216"/>
        <dbReference type="EC" id="2.7.2.8"/>
    </reaction>
</comment>
<comment type="pathway">
    <text evidence="1">Amino-acid biosynthesis; L-arginine biosynthesis; N(2)-acetyl-L-ornithine from L-glutamate: step 2/4.</text>
</comment>
<comment type="subunit">
    <text evidence="1">Homodimer.</text>
</comment>
<comment type="subcellular location">
    <subcellularLocation>
        <location evidence="1">Cytoplasm</location>
    </subcellularLocation>
</comment>
<comment type="similarity">
    <text evidence="1">Belongs to the acetylglutamate kinase family. ArgB subfamily.</text>
</comment>
<name>ARGB_SALSV</name>
<feature type="chain" id="PRO_1000092885" description="Acetylglutamate kinase">
    <location>
        <begin position="1"/>
        <end position="257"/>
    </location>
</feature>
<feature type="binding site" evidence="1">
    <location>
        <begin position="43"/>
        <end position="44"/>
    </location>
    <ligand>
        <name>substrate</name>
    </ligand>
</feature>
<feature type="binding site" evidence="1">
    <location>
        <position position="65"/>
    </location>
    <ligand>
        <name>substrate</name>
    </ligand>
</feature>
<feature type="binding site" evidence="1">
    <location>
        <position position="157"/>
    </location>
    <ligand>
        <name>substrate</name>
    </ligand>
</feature>
<feature type="binding site" evidence="1">
    <location>
        <begin position="180"/>
        <end position="185"/>
    </location>
    <ligand>
        <name>ATP</name>
        <dbReference type="ChEBI" id="CHEBI:30616"/>
    </ligand>
</feature>
<feature type="binding site" evidence="1">
    <location>
        <begin position="208"/>
        <end position="210"/>
    </location>
    <ligand>
        <name>ATP</name>
        <dbReference type="ChEBI" id="CHEBI:30616"/>
    </ligand>
</feature>
<feature type="site" description="Transition state stabilizer" evidence="1">
    <location>
        <position position="7"/>
    </location>
</feature>
<feature type="site" description="Transition state stabilizer" evidence="1">
    <location>
        <position position="216"/>
    </location>
</feature>
<reference key="1">
    <citation type="journal article" date="2011" name="J. Bacteriol.">
        <title>Comparative genomics of 28 Salmonella enterica isolates: evidence for CRISPR-mediated adaptive sublineage evolution.</title>
        <authorList>
            <person name="Fricke W.F."/>
            <person name="Mammel M.K."/>
            <person name="McDermott P.F."/>
            <person name="Tartera C."/>
            <person name="White D.G."/>
            <person name="Leclerc J.E."/>
            <person name="Ravel J."/>
            <person name="Cebula T.A."/>
        </authorList>
    </citation>
    <scope>NUCLEOTIDE SEQUENCE [LARGE SCALE GENOMIC DNA]</scope>
    <source>
        <strain>CVM19633</strain>
    </source>
</reference>
<dbReference type="EC" id="2.7.2.8" evidence="1"/>
<dbReference type="EMBL" id="CP001127">
    <property type="protein sequence ID" value="ACF91358.1"/>
    <property type="molecule type" value="Genomic_DNA"/>
</dbReference>
<dbReference type="SMR" id="B4TQH5"/>
<dbReference type="KEGG" id="sew:SeSA_A4332"/>
<dbReference type="HOGENOM" id="CLU_053680_1_1_6"/>
<dbReference type="UniPathway" id="UPA00068">
    <property type="reaction ID" value="UER00107"/>
</dbReference>
<dbReference type="Proteomes" id="UP000001865">
    <property type="component" value="Chromosome"/>
</dbReference>
<dbReference type="GO" id="GO:0005737">
    <property type="term" value="C:cytoplasm"/>
    <property type="evidence" value="ECO:0007669"/>
    <property type="project" value="UniProtKB-SubCell"/>
</dbReference>
<dbReference type="GO" id="GO:0003991">
    <property type="term" value="F:acetylglutamate kinase activity"/>
    <property type="evidence" value="ECO:0007669"/>
    <property type="project" value="UniProtKB-UniRule"/>
</dbReference>
<dbReference type="GO" id="GO:0005524">
    <property type="term" value="F:ATP binding"/>
    <property type="evidence" value="ECO:0007669"/>
    <property type="project" value="UniProtKB-UniRule"/>
</dbReference>
<dbReference type="GO" id="GO:0042450">
    <property type="term" value="P:arginine biosynthetic process via ornithine"/>
    <property type="evidence" value="ECO:0007669"/>
    <property type="project" value="UniProtKB-UniRule"/>
</dbReference>
<dbReference type="GO" id="GO:0006526">
    <property type="term" value="P:L-arginine biosynthetic process"/>
    <property type="evidence" value="ECO:0007669"/>
    <property type="project" value="UniProtKB-UniPathway"/>
</dbReference>
<dbReference type="CDD" id="cd04249">
    <property type="entry name" value="AAK_NAGK-NC"/>
    <property type="match status" value="1"/>
</dbReference>
<dbReference type="FunFam" id="3.40.1160.10:FF:000008">
    <property type="entry name" value="Acetylglutamate kinase"/>
    <property type="match status" value="1"/>
</dbReference>
<dbReference type="Gene3D" id="3.40.1160.10">
    <property type="entry name" value="Acetylglutamate kinase-like"/>
    <property type="match status" value="1"/>
</dbReference>
<dbReference type="HAMAP" id="MF_00082">
    <property type="entry name" value="ArgB"/>
    <property type="match status" value="1"/>
</dbReference>
<dbReference type="InterPro" id="IPR036393">
    <property type="entry name" value="AceGlu_kinase-like_sf"/>
</dbReference>
<dbReference type="InterPro" id="IPR004662">
    <property type="entry name" value="AcgluKinase_fam"/>
</dbReference>
<dbReference type="InterPro" id="IPR037528">
    <property type="entry name" value="ArgB"/>
</dbReference>
<dbReference type="InterPro" id="IPR001048">
    <property type="entry name" value="Asp/Glu/Uridylate_kinase"/>
</dbReference>
<dbReference type="InterPro" id="IPR041731">
    <property type="entry name" value="NAGK-NC"/>
</dbReference>
<dbReference type="NCBIfam" id="TIGR00761">
    <property type="entry name" value="argB"/>
    <property type="match status" value="1"/>
</dbReference>
<dbReference type="PANTHER" id="PTHR23342">
    <property type="entry name" value="N-ACETYLGLUTAMATE SYNTHASE"/>
    <property type="match status" value="1"/>
</dbReference>
<dbReference type="PANTHER" id="PTHR23342:SF0">
    <property type="entry name" value="N-ACETYLGLUTAMATE SYNTHASE, MITOCHONDRIAL"/>
    <property type="match status" value="1"/>
</dbReference>
<dbReference type="Pfam" id="PF00696">
    <property type="entry name" value="AA_kinase"/>
    <property type="match status" value="1"/>
</dbReference>
<dbReference type="PIRSF" id="PIRSF000728">
    <property type="entry name" value="NAGK"/>
    <property type="match status" value="1"/>
</dbReference>
<dbReference type="SUPFAM" id="SSF53633">
    <property type="entry name" value="Carbamate kinase-like"/>
    <property type="match status" value="1"/>
</dbReference>
<keyword id="KW-0028">Amino-acid biosynthesis</keyword>
<keyword id="KW-0055">Arginine biosynthesis</keyword>
<keyword id="KW-0067">ATP-binding</keyword>
<keyword id="KW-0963">Cytoplasm</keyword>
<keyword id="KW-0418">Kinase</keyword>
<keyword id="KW-0547">Nucleotide-binding</keyword>
<keyword id="KW-0808">Transferase</keyword>
<gene>
    <name evidence="1" type="primary">argB</name>
    <name type="ordered locus">SeSA_A4332</name>
</gene>
<proteinExistence type="inferred from homology"/>